<organism evidence="6">
    <name type="scientific">Archaeoglobus fulgidus (strain ATCC 49558 / DSM 4304 / JCM 9628 / NBRC 100126 / VC-16)</name>
    <dbReference type="NCBI Taxonomy" id="224325"/>
    <lineage>
        <taxon>Archaea</taxon>
        <taxon>Methanobacteriati</taxon>
        <taxon>Methanobacteriota</taxon>
        <taxon>Archaeoglobi</taxon>
        <taxon>Archaeoglobales</taxon>
        <taxon>Archaeoglobaceae</taxon>
        <taxon>Archaeoglobus</taxon>
    </lineage>
</organism>
<accession>O29428</accession>
<dbReference type="EC" id="1.16.1.10" evidence="1"/>
<dbReference type="EMBL" id="AE000782">
    <property type="protein sequence ID" value="AAB90418.1"/>
    <property type="molecule type" value="Genomic_DNA"/>
</dbReference>
<dbReference type="PIR" id="F69353">
    <property type="entry name" value="F69353"/>
</dbReference>
<dbReference type="RefSeq" id="WP_010878333.1">
    <property type="nucleotide sequence ID" value="NC_000917.1"/>
</dbReference>
<dbReference type="PDB" id="1I0R">
    <property type="method" value="X-ray"/>
    <property type="resolution" value="1.50 A"/>
    <property type="chains" value="A/B=1-169"/>
</dbReference>
<dbReference type="PDB" id="1I0S">
    <property type="method" value="X-ray"/>
    <property type="resolution" value="1.65 A"/>
    <property type="chains" value="A/B=1-169"/>
</dbReference>
<dbReference type="PDBsum" id="1I0R"/>
<dbReference type="PDBsum" id="1I0S"/>
<dbReference type="SMR" id="O29428"/>
<dbReference type="STRING" id="224325.AF_0830"/>
<dbReference type="PaxDb" id="224325-AF_0830"/>
<dbReference type="EnsemblBacteria" id="AAB90418">
    <property type="protein sequence ID" value="AAB90418"/>
    <property type="gene ID" value="AF_0830"/>
</dbReference>
<dbReference type="GeneID" id="1484049"/>
<dbReference type="KEGG" id="afu:AF_0830"/>
<dbReference type="eggNOG" id="arCOG02017">
    <property type="taxonomic scope" value="Archaea"/>
</dbReference>
<dbReference type="HOGENOM" id="CLU_059021_4_1_2"/>
<dbReference type="OrthoDB" id="8522at2157"/>
<dbReference type="PhylomeDB" id="O29428"/>
<dbReference type="BRENDA" id="1.16.1.10">
    <property type="organism ID" value="414"/>
</dbReference>
<dbReference type="EvolutionaryTrace" id="O29428"/>
<dbReference type="Proteomes" id="UP000002199">
    <property type="component" value="Chromosome"/>
</dbReference>
<dbReference type="GO" id="GO:0140618">
    <property type="term" value="F:ferric-chelate reductase (NADH) activity"/>
    <property type="evidence" value="ECO:0007669"/>
    <property type="project" value="RHEA"/>
</dbReference>
<dbReference type="GO" id="GO:0052851">
    <property type="term" value="F:ferric-chelate reductase (NADPH) activity"/>
    <property type="evidence" value="ECO:0007669"/>
    <property type="project" value="RHEA"/>
</dbReference>
<dbReference type="GO" id="GO:0010181">
    <property type="term" value="F:FMN binding"/>
    <property type="evidence" value="ECO:0000314"/>
    <property type="project" value="UniProtKB"/>
</dbReference>
<dbReference type="GO" id="GO:0016723">
    <property type="term" value="F:oxidoreductase activity, acting on metal ions, NAD or NADP as acceptor"/>
    <property type="evidence" value="ECO:0000314"/>
    <property type="project" value="UniProtKB"/>
</dbReference>
<dbReference type="GO" id="GO:0042803">
    <property type="term" value="F:protein homodimerization activity"/>
    <property type="evidence" value="ECO:0000314"/>
    <property type="project" value="UniProtKB"/>
</dbReference>
<dbReference type="GO" id="GO:0042602">
    <property type="term" value="F:riboflavin reductase (NADPH) activity"/>
    <property type="evidence" value="ECO:0007669"/>
    <property type="project" value="TreeGrafter"/>
</dbReference>
<dbReference type="FunFam" id="2.30.110.10:FF:000065">
    <property type="entry name" value="Ferric-chelate reductase (NAD(P)H)"/>
    <property type="match status" value="1"/>
</dbReference>
<dbReference type="Gene3D" id="2.30.110.10">
    <property type="entry name" value="Electron Transport, Fmn-binding Protein, Chain A"/>
    <property type="match status" value="1"/>
</dbReference>
<dbReference type="InterPro" id="IPR002563">
    <property type="entry name" value="Flavin_Rdtase-like_dom"/>
</dbReference>
<dbReference type="InterPro" id="IPR050268">
    <property type="entry name" value="NADH-dep_flavin_reductase"/>
</dbReference>
<dbReference type="InterPro" id="IPR012349">
    <property type="entry name" value="Split_barrel_FMN-bd"/>
</dbReference>
<dbReference type="PANTHER" id="PTHR30466">
    <property type="entry name" value="FLAVIN REDUCTASE"/>
    <property type="match status" value="1"/>
</dbReference>
<dbReference type="PANTHER" id="PTHR30466:SF1">
    <property type="entry name" value="FMN REDUCTASE (NADH) RUTF"/>
    <property type="match status" value="1"/>
</dbReference>
<dbReference type="Pfam" id="PF01613">
    <property type="entry name" value="Flavin_Reduct"/>
    <property type="match status" value="1"/>
</dbReference>
<dbReference type="SMART" id="SM00903">
    <property type="entry name" value="Flavin_Reduct"/>
    <property type="match status" value="1"/>
</dbReference>
<dbReference type="SUPFAM" id="SSF50475">
    <property type="entry name" value="FMN-binding split barrel"/>
    <property type="match status" value="1"/>
</dbReference>
<name>FERCR_ARCFU</name>
<gene>
    <name evidence="4" type="primary">feR</name>
    <name evidence="6" type="ordered locus">AF_0830</name>
</gene>
<protein>
    <recommendedName>
        <fullName evidence="5">Ferric-chelate reductase (NAD(P)H)</fullName>
        <ecNumber evidence="1">1.16.1.10</ecNumber>
    </recommendedName>
</protein>
<keyword id="KW-0002">3D-structure</keyword>
<keyword id="KW-0903">Direct protein sequencing</keyword>
<keyword id="KW-0285">Flavoprotein</keyword>
<keyword id="KW-0288">FMN</keyword>
<keyword id="KW-0521">NADP</keyword>
<keyword id="KW-0547">Nucleotide-binding</keyword>
<keyword id="KW-0560">Oxidoreductase</keyword>
<keyword id="KW-1185">Reference proteome</keyword>
<feature type="chain" id="PRO_0000430711" description="Ferric-chelate reductase (NAD(P)H)">
    <location>
        <begin position="1"/>
        <end position="169"/>
    </location>
</feature>
<feature type="binding site" evidence="2 8">
    <location>
        <position position="7"/>
    </location>
    <ligand>
        <name>NADP(+)</name>
        <dbReference type="ChEBI" id="CHEBI:58349"/>
    </ligand>
</feature>
<feature type="binding site" evidence="2 7 8">
    <location>
        <begin position="27"/>
        <end position="31"/>
    </location>
    <ligand>
        <name>FMN</name>
        <dbReference type="ChEBI" id="CHEBI:58210"/>
    </ligand>
</feature>
<feature type="binding site" evidence="2 7 8">
    <location>
        <begin position="45"/>
        <end position="52"/>
    </location>
    <ligand>
        <name>FMN</name>
        <dbReference type="ChEBI" id="CHEBI:58210"/>
    </ligand>
</feature>
<feature type="binding site" evidence="2 7 8">
    <location>
        <begin position="82"/>
        <end position="84"/>
    </location>
    <ligand>
        <name>FMN</name>
        <dbReference type="ChEBI" id="CHEBI:58210"/>
    </ligand>
</feature>
<feature type="binding site" evidence="2 7 8">
    <location>
        <position position="89"/>
    </location>
    <ligand>
        <name>FMN</name>
        <dbReference type="ChEBI" id="CHEBI:58210"/>
    </ligand>
</feature>
<feature type="binding site" evidence="2 8">
    <location>
        <position position="126"/>
    </location>
    <ligand>
        <name>NADP(+)</name>
        <dbReference type="ChEBI" id="CHEBI:58349"/>
    </ligand>
</feature>
<feature type="binding site" evidence="2 8">
    <location>
        <begin position="147"/>
        <end position="154"/>
    </location>
    <ligand>
        <name>NADP(+)</name>
        <dbReference type="ChEBI" id="CHEBI:58349"/>
    </ligand>
</feature>
<feature type="helix" evidence="9">
    <location>
        <begin position="3"/>
        <end position="8"/>
    </location>
</feature>
<feature type="strand" evidence="9">
    <location>
        <begin position="14"/>
        <end position="20"/>
    </location>
</feature>
<feature type="strand" evidence="9">
    <location>
        <begin position="23"/>
        <end position="30"/>
    </location>
</feature>
<feature type="strand" evidence="9">
    <location>
        <begin position="32"/>
        <end position="36"/>
    </location>
</feature>
<feature type="turn" evidence="9">
    <location>
        <begin position="37"/>
        <end position="40"/>
    </location>
</feature>
<feature type="strand" evidence="9">
    <location>
        <begin position="41"/>
        <end position="47"/>
    </location>
</feature>
<feature type="helix" evidence="9">
    <location>
        <begin position="51"/>
        <end position="59"/>
    </location>
</feature>
<feature type="strand" evidence="9">
    <location>
        <begin position="60"/>
        <end position="68"/>
    </location>
</feature>
<feature type="helix" evidence="9">
    <location>
        <begin position="73"/>
        <end position="80"/>
    </location>
</feature>
<feature type="turn" evidence="9">
    <location>
        <begin position="84"/>
        <end position="86"/>
    </location>
</feature>
<feature type="turn" evidence="9">
    <location>
        <begin position="89"/>
        <end position="92"/>
    </location>
</feature>
<feature type="strand" evidence="9">
    <location>
        <begin position="95"/>
        <end position="97"/>
    </location>
</feature>
<feature type="strand" evidence="9">
    <location>
        <begin position="103"/>
        <end position="105"/>
    </location>
</feature>
<feature type="strand" evidence="9">
    <location>
        <begin position="109"/>
        <end position="122"/>
    </location>
</feature>
<feature type="strand" evidence="9">
    <location>
        <begin position="124"/>
        <end position="138"/>
    </location>
</feature>
<feature type="helix" evidence="9">
    <location>
        <begin position="147"/>
        <end position="154"/>
    </location>
</feature>
<feature type="strand" evidence="9">
    <location>
        <begin position="158"/>
        <end position="160"/>
    </location>
</feature>
<feature type="strand" evidence="9">
    <location>
        <begin position="165"/>
        <end position="167"/>
    </location>
</feature>
<sequence>MDVEAFYKISYGLYIVTSESNGRKCGQIANTVFQLTSKPVQIAVCLNKENDTHNAVKESGAFGVSVLELETPMEFIGRFGFRKSSEFEKFDGVEYKTGKTGVPLVTQHAVAVIEAKVVKECDVGTHTLFVGEAVDAEVLKDAEVLTYADYHLMKKGKTPRTATVYFESK</sequence>
<comment type="function">
    <text evidence="1">Catalyzes the reduction of bound ferric iron (Fe(3+)) in a variety of iron chelators (siderophores) using NAD(P)H as the electron donor, resulting in the release of Fe(2+). Not active with uncomplexed Fe(3+). Also reduces FMN and FAD, but not riboflavin.</text>
</comment>
<comment type="catalytic activity">
    <reaction evidence="1">
        <text>2 a Fe(II)-siderophore + NAD(+) + H(+) = 2 a Fe(III)-siderophore + NADH</text>
        <dbReference type="Rhea" id="RHEA:15061"/>
        <dbReference type="Rhea" id="RHEA-COMP:11342"/>
        <dbReference type="Rhea" id="RHEA-COMP:11344"/>
        <dbReference type="ChEBI" id="CHEBI:15378"/>
        <dbReference type="ChEBI" id="CHEBI:29033"/>
        <dbReference type="ChEBI" id="CHEBI:29034"/>
        <dbReference type="ChEBI" id="CHEBI:57540"/>
        <dbReference type="ChEBI" id="CHEBI:57945"/>
        <dbReference type="EC" id="1.16.1.10"/>
    </reaction>
</comment>
<comment type="catalytic activity">
    <reaction evidence="1">
        <text>2 a Fe(II)-siderophore + NADP(+) + H(+) = 2 a Fe(III)-siderophore + NADPH</text>
        <dbReference type="Rhea" id="RHEA:28795"/>
        <dbReference type="Rhea" id="RHEA-COMP:11342"/>
        <dbReference type="Rhea" id="RHEA-COMP:11344"/>
        <dbReference type="ChEBI" id="CHEBI:15378"/>
        <dbReference type="ChEBI" id="CHEBI:29033"/>
        <dbReference type="ChEBI" id="CHEBI:29034"/>
        <dbReference type="ChEBI" id="CHEBI:57783"/>
        <dbReference type="ChEBI" id="CHEBI:58349"/>
        <dbReference type="EC" id="1.16.1.10"/>
    </reaction>
</comment>
<comment type="cofactor">
    <cofactor evidence="1">
        <name>FMN</name>
        <dbReference type="ChEBI" id="CHEBI:58210"/>
    </cofactor>
    <cofactor evidence="1">
        <name>FAD</name>
        <dbReference type="ChEBI" id="CHEBI:57692"/>
    </cofactor>
</comment>
<comment type="biophysicochemical properties">
    <kinetics>
        <KM evidence="1">61 uM for NADH (with Fe(+3) as acceptor)</KM>
        <KM evidence="1">80 uM for NAD(P)H (with Fe(+3) as acceptor)</KM>
        <KM evidence="1">66 uM for Fe(+3) (with NAD(P)H as donor)</KM>
        <KM evidence="1">0.3 uM for FMN (with NAD(P)H as donor)</KM>
        <Vmax evidence="1">4935.0 umol/min/mg enzyme with NADH as donor and Fe(3+) as acceptor</Vmax>
        <Vmax evidence="1">3505.0 umol/min/mg enzyme with NAD(P)H as donor and Fe(3+) as acceptor</Vmax>
        <Vmax evidence="1">280.0 umol/min/mg enzyme with NAD(P)H as donor and FMN as acceptor</Vmax>
        <Vmax evidence="1">350.0 umol/min/mg enzyme with NAD(P)H as donor and FAD as acceptor</Vmax>
    </kinetics>
    <temperatureDependence>
        <text evidence="1">Optimum temperature is 88 degrees Celsius.</text>
    </temperatureDependence>
</comment>
<comment type="subunit">
    <text evidence="2 3">Homodimer.</text>
</comment>
<comment type="similarity">
    <text evidence="5">Belongs to the non-flavoprotein flavin reductase family.</text>
</comment>
<reference key="1">
    <citation type="journal article" date="1997" name="Nature">
        <title>The complete genome sequence of the hyperthermophilic, sulphate-reducing archaeon Archaeoglobus fulgidus.</title>
        <authorList>
            <person name="Klenk H.-P."/>
            <person name="Clayton R.A."/>
            <person name="Tomb J.-F."/>
            <person name="White O."/>
            <person name="Nelson K.E."/>
            <person name="Ketchum K.A."/>
            <person name="Dodson R.J."/>
            <person name="Gwinn M.L."/>
            <person name="Hickey E.K."/>
            <person name="Peterson J.D."/>
            <person name="Richardson D.L."/>
            <person name="Kerlavage A.R."/>
            <person name="Graham D.E."/>
            <person name="Kyrpides N.C."/>
            <person name="Fleischmann R.D."/>
            <person name="Quackenbush J."/>
            <person name="Lee N.H."/>
            <person name="Sutton G.G."/>
            <person name="Gill S.R."/>
            <person name="Kirkness E.F."/>
            <person name="Dougherty B.A."/>
            <person name="McKenney K."/>
            <person name="Adams M.D."/>
            <person name="Loftus B.J."/>
            <person name="Peterson S.N."/>
            <person name="Reich C.I."/>
            <person name="McNeil L.K."/>
            <person name="Badger J.H."/>
            <person name="Glodek A."/>
            <person name="Zhou L."/>
            <person name="Overbeek R."/>
            <person name="Gocayne J.D."/>
            <person name="Weidman J.F."/>
            <person name="McDonald L.A."/>
            <person name="Utterback T.R."/>
            <person name="Cotton M.D."/>
            <person name="Spriggs T."/>
            <person name="Artiach P."/>
            <person name="Kaine B.P."/>
            <person name="Sykes S.M."/>
            <person name="Sadow P.W."/>
            <person name="D'Andrea K.P."/>
            <person name="Bowman C."/>
            <person name="Fujii C."/>
            <person name="Garland S.A."/>
            <person name="Mason T.M."/>
            <person name="Olsen G.J."/>
            <person name="Fraser C.M."/>
            <person name="Smith H.O."/>
            <person name="Woese C.R."/>
            <person name="Venter J.C."/>
        </authorList>
    </citation>
    <scope>NUCLEOTIDE SEQUENCE [LARGE SCALE GENOMIC DNA]</scope>
    <source>
        <strain>ATCC 49558 / DSM 4304 / JCM 9628 / NBRC 100126 / VC-16</strain>
    </source>
</reference>
<reference key="2">
    <citation type="journal article" date="1999" name="J. Biol. Chem.">
        <title>Identification and characterization of a novel ferric reductase from the hyperthermophilic Archaeon Archaeoglobus fulgidus.</title>
        <authorList>
            <person name="Vadas A."/>
            <person name="Monbouquette H.G."/>
            <person name="Johnson E."/>
            <person name="Schroeder I."/>
        </authorList>
    </citation>
    <scope>PROTEIN SEQUENCE OF 1-19</scope>
    <scope>FUNCTION</scope>
    <scope>CATALYTIC ACTIVITY</scope>
    <scope>COFACTOR</scope>
    <scope>SUBUNIT</scope>
    <scope>BIOPHYSICOCHEMICAL PROPERTIES</scope>
</reference>
<reference key="3">
    <citation type="journal article" date="2001" name="Structure">
        <title>Crystal structures of a novel ferric reductase from the hyperthermophilic archaeon Archaeoglobus fulgidus and its complex with NADP+.</title>
        <authorList>
            <person name="Chiu H.J."/>
            <person name="Johnson E."/>
            <person name="Schroder I."/>
            <person name="Rees D.C."/>
        </authorList>
    </citation>
    <scope>X-RAY CRYSTALLOGRAPHY (1.50 ANGSTROMS) IN COMPLEX WITH FMN AND NADP</scope>
    <scope>SUBUNIT</scope>
</reference>
<evidence type="ECO:0000269" key="1">
    <source>
    </source>
</evidence>
<evidence type="ECO:0000269" key="2">
    <source>
    </source>
</evidence>
<evidence type="ECO:0000303" key="3">
    <source>
    </source>
</evidence>
<evidence type="ECO:0000303" key="4">
    <source>
    </source>
</evidence>
<evidence type="ECO:0000305" key="5"/>
<evidence type="ECO:0000312" key="6">
    <source>
        <dbReference type="EMBL" id="AAB90418.1"/>
    </source>
</evidence>
<evidence type="ECO:0007744" key="7">
    <source>
        <dbReference type="PDB" id="1I0R"/>
    </source>
</evidence>
<evidence type="ECO:0007744" key="8">
    <source>
        <dbReference type="PDB" id="1I0S"/>
    </source>
</evidence>
<evidence type="ECO:0007829" key="9">
    <source>
        <dbReference type="PDB" id="1I0R"/>
    </source>
</evidence>
<proteinExistence type="evidence at protein level"/>